<feature type="chain" id="PRO_1000096843" description="Phosphopantetheine adenylyltransferase">
    <location>
        <begin position="1"/>
        <end position="159"/>
    </location>
</feature>
<feature type="binding site" evidence="1">
    <location>
        <begin position="9"/>
        <end position="10"/>
    </location>
    <ligand>
        <name>ATP</name>
        <dbReference type="ChEBI" id="CHEBI:30616"/>
    </ligand>
</feature>
<feature type="binding site" evidence="1">
    <location>
        <position position="9"/>
    </location>
    <ligand>
        <name>substrate</name>
    </ligand>
</feature>
<feature type="binding site" evidence="1">
    <location>
        <position position="17"/>
    </location>
    <ligand>
        <name>ATP</name>
        <dbReference type="ChEBI" id="CHEBI:30616"/>
    </ligand>
</feature>
<feature type="binding site" evidence="1">
    <location>
        <position position="41"/>
    </location>
    <ligand>
        <name>substrate</name>
    </ligand>
</feature>
<feature type="binding site" evidence="1">
    <location>
        <position position="73"/>
    </location>
    <ligand>
        <name>substrate</name>
    </ligand>
</feature>
<feature type="binding site" evidence="1">
    <location>
        <position position="87"/>
    </location>
    <ligand>
        <name>substrate</name>
    </ligand>
</feature>
<feature type="binding site" evidence="1">
    <location>
        <begin position="88"/>
        <end position="90"/>
    </location>
    <ligand>
        <name>ATP</name>
        <dbReference type="ChEBI" id="CHEBI:30616"/>
    </ligand>
</feature>
<feature type="binding site" evidence="1">
    <location>
        <position position="98"/>
    </location>
    <ligand>
        <name>ATP</name>
        <dbReference type="ChEBI" id="CHEBI:30616"/>
    </ligand>
</feature>
<feature type="binding site" evidence="1">
    <location>
        <begin position="122"/>
        <end position="128"/>
    </location>
    <ligand>
        <name>ATP</name>
        <dbReference type="ChEBI" id="CHEBI:30616"/>
    </ligand>
</feature>
<feature type="site" description="Transition state stabilizer" evidence="1">
    <location>
        <position position="17"/>
    </location>
</feature>
<name>COAD_STRGG</name>
<dbReference type="EC" id="2.7.7.3" evidence="1"/>
<dbReference type="EMBL" id="AP009493">
    <property type="protein sequence ID" value="BAG18741.1"/>
    <property type="molecule type" value="Genomic_DNA"/>
</dbReference>
<dbReference type="RefSeq" id="WP_007448181.1">
    <property type="nucleotide sequence ID" value="NC_010572.1"/>
</dbReference>
<dbReference type="SMR" id="B1VYY6"/>
<dbReference type="GeneID" id="91373245"/>
<dbReference type="KEGG" id="sgr:SGR_1912"/>
<dbReference type="eggNOG" id="COG0669">
    <property type="taxonomic scope" value="Bacteria"/>
</dbReference>
<dbReference type="HOGENOM" id="CLU_100149_0_1_11"/>
<dbReference type="UniPathway" id="UPA00241">
    <property type="reaction ID" value="UER00355"/>
</dbReference>
<dbReference type="Proteomes" id="UP000001685">
    <property type="component" value="Chromosome"/>
</dbReference>
<dbReference type="GO" id="GO:0005737">
    <property type="term" value="C:cytoplasm"/>
    <property type="evidence" value="ECO:0007669"/>
    <property type="project" value="UniProtKB-SubCell"/>
</dbReference>
<dbReference type="GO" id="GO:0005524">
    <property type="term" value="F:ATP binding"/>
    <property type="evidence" value="ECO:0007669"/>
    <property type="project" value="UniProtKB-KW"/>
</dbReference>
<dbReference type="GO" id="GO:0004595">
    <property type="term" value="F:pantetheine-phosphate adenylyltransferase activity"/>
    <property type="evidence" value="ECO:0007669"/>
    <property type="project" value="UniProtKB-UniRule"/>
</dbReference>
<dbReference type="GO" id="GO:0015937">
    <property type="term" value="P:coenzyme A biosynthetic process"/>
    <property type="evidence" value="ECO:0007669"/>
    <property type="project" value="UniProtKB-UniRule"/>
</dbReference>
<dbReference type="CDD" id="cd02163">
    <property type="entry name" value="PPAT"/>
    <property type="match status" value="1"/>
</dbReference>
<dbReference type="FunFam" id="3.40.50.620:FF:000012">
    <property type="entry name" value="Phosphopantetheine adenylyltransferase"/>
    <property type="match status" value="1"/>
</dbReference>
<dbReference type="Gene3D" id="3.40.50.620">
    <property type="entry name" value="HUPs"/>
    <property type="match status" value="1"/>
</dbReference>
<dbReference type="HAMAP" id="MF_00151">
    <property type="entry name" value="PPAT_bact"/>
    <property type="match status" value="1"/>
</dbReference>
<dbReference type="InterPro" id="IPR004821">
    <property type="entry name" value="Cyt_trans-like"/>
</dbReference>
<dbReference type="InterPro" id="IPR001980">
    <property type="entry name" value="PPAT"/>
</dbReference>
<dbReference type="InterPro" id="IPR014729">
    <property type="entry name" value="Rossmann-like_a/b/a_fold"/>
</dbReference>
<dbReference type="NCBIfam" id="TIGR01510">
    <property type="entry name" value="coaD_prev_kdtB"/>
    <property type="match status" value="1"/>
</dbReference>
<dbReference type="NCBIfam" id="TIGR00125">
    <property type="entry name" value="cyt_tran_rel"/>
    <property type="match status" value="1"/>
</dbReference>
<dbReference type="PANTHER" id="PTHR21342">
    <property type="entry name" value="PHOSPHOPANTETHEINE ADENYLYLTRANSFERASE"/>
    <property type="match status" value="1"/>
</dbReference>
<dbReference type="PANTHER" id="PTHR21342:SF1">
    <property type="entry name" value="PHOSPHOPANTETHEINE ADENYLYLTRANSFERASE"/>
    <property type="match status" value="1"/>
</dbReference>
<dbReference type="Pfam" id="PF01467">
    <property type="entry name" value="CTP_transf_like"/>
    <property type="match status" value="1"/>
</dbReference>
<dbReference type="PRINTS" id="PR01020">
    <property type="entry name" value="LPSBIOSNTHSS"/>
</dbReference>
<dbReference type="SUPFAM" id="SSF52374">
    <property type="entry name" value="Nucleotidylyl transferase"/>
    <property type="match status" value="1"/>
</dbReference>
<protein>
    <recommendedName>
        <fullName evidence="1">Phosphopantetheine adenylyltransferase</fullName>
        <ecNumber evidence="1">2.7.7.3</ecNumber>
    </recommendedName>
    <alternativeName>
        <fullName evidence="1">Dephospho-CoA pyrophosphorylase</fullName>
    </alternativeName>
    <alternativeName>
        <fullName evidence="1">Pantetheine-phosphate adenylyltransferase</fullName>
        <shortName evidence="1">PPAT</shortName>
    </alternativeName>
</protein>
<proteinExistence type="inferred from homology"/>
<evidence type="ECO:0000255" key="1">
    <source>
        <dbReference type="HAMAP-Rule" id="MF_00151"/>
    </source>
</evidence>
<keyword id="KW-0067">ATP-binding</keyword>
<keyword id="KW-0173">Coenzyme A biosynthesis</keyword>
<keyword id="KW-0963">Cytoplasm</keyword>
<keyword id="KW-0460">Magnesium</keyword>
<keyword id="KW-0547">Nucleotide-binding</keyword>
<keyword id="KW-0548">Nucleotidyltransferase</keyword>
<keyword id="KW-0808">Transferase</keyword>
<comment type="function">
    <text evidence="1">Reversibly transfers an adenylyl group from ATP to 4'-phosphopantetheine, yielding dephospho-CoA (dPCoA) and pyrophosphate.</text>
</comment>
<comment type="catalytic activity">
    <reaction evidence="1">
        <text>(R)-4'-phosphopantetheine + ATP + H(+) = 3'-dephospho-CoA + diphosphate</text>
        <dbReference type="Rhea" id="RHEA:19801"/>
        <dbReference type="ChEBI" id="CHEBI:15378"/>
        <dbReference type="ChEBI" id="CHEBI:30616"/>
        <dbReference type="ChEBI" id="CHEBI:33019"/>
        <dbReference type="ChEBI" id="CHEBI:57328"/>
        <dbReference type="ChEBI" id="CHEBI:61723"/>
        <dbReference type="EC" id="2.7.7.3"/>
    </reaction>
</comment>
<comment type="cofactor">
    <cofactor evidence="1">
        <name>Mg(2+)</name>
        <dbReference type="ChEBI" id="CHEBI:18420"/>
    </cofactor>
</comment>
<comment type="pathway">
    <text evidence="1">Cofactor biosynthesis; coenzyme A biosynthesis; CoA from (R)-pantothenate: step 4/5.</text>
</comment>
<comment type="subunit">
    <text evidence="1">Homohexamer.</text>
</comment>
<comment type="subcellular location">
    <subcellularLocation>
        <location evidence="1">Cytoplasm</location>
    </subcellularLocation>
</comment>
<comment type="similarity">
    <text evidence="1">Belongs to the bacterial CoaD family.</text>
</comment>
<reference key="1">
    <citation type="journal article" date="2008" name="J. Bacteriol.">
        <title>Genome sequence of the streptomycin-producing microorganism Streptomyces griseus IFO 13350.</title>
        <authorList>
            <person name="Ohnishi Y."/>
            <person name="Ishikawa J."/>
            <person name="Hara H."/>
            <person name="Suzuki H."/>
            <person name="Ikenoya M."/>
            <person name="Ikeda H."/>
            <person name="Yamashita A."/>
            <person name="Hattori M."/>
            <person name="Horinouchi S."/>
        </authorList>
    </citation>
    <scope>NUCLEOTIDE SEQUENCE [LARGE SCALE GENOMIC DNA]</scope>
    <source>
        <strain>JCM 4626 / CBS 651.72 / NBRC 13350 / KCC S-0626 / ISP 5235</strain>
    </source>
</reference>
<gene>
    <name evidence="1" type="primary">coaD</name>
    <name type="ordered locus">SGR_1912</name>
</gene>
<sequence>MRRAVCPGSFDPITNGHLDIIGRASKLYDVVHVAVMINQSKKGLFTVDERIELIREVTADFGNVEVESFHGLLVDFCKQREIPAIVKGLRAVSDFDYELQMAQMNNGLSGVETLFVPTNPTYSFLSSSLVKEVATWGGDVSHLLPPTVHEALVKRLGER</sequence>
<organism>
    <name type="scientific">Streptomyces griseus subsp. griseus (strain JCM 4626 / CBS 651.72 / NBRC 13350 / KCC S-0626 / ISP 5235)</name>
    <dbReference type="NCBI Taxonomy" id="455632"/>
    <lineage>
        <taxon>Bacteria</taxon>
        <taxon>Bacillati</taxon>
        <taxon>Actinomycetota</taxon>
        <taxon>Actinomycetes</taxon>
        <taxon>Kitasatosporales</taxon>
        <taxon>Streptomycetaceae</taxon>
        <taxon>Streptomyces</taxon>
    </lineage>
</organism>
<accession>B1VYY6</accession>